<sequence length="283" mass="30101">MKILSIQSAVAYGHVGNSAAVFPLQRIGVEVLPVYTVNFSNHTGYGAWRGPLIAPDEVREVITGIEERRVLGSIDAVLSGYQGSEGIGDVIVDAVARVKAADPHAVYACDPVMGNAASGCFVAPAIPDLLRDRVVPVADLITPNQFELGYLTGSTPDTLESTLASVEAARAMGPSTVLVTSVERPDRPEGTIEMLAVDDTGAWIVQTPRLPMKANGSGDVTAALFTAHYVRTGEAETALRKTVSSVYDLLASTLESGERELRLVESQEFYANPREQFAVSRVG</sequence>
<name>PDXY_LEIXX</name>
<comment type="function">
    <text evidence="1">Pyridoxal kinase involved in the salvage pathway of pyridoxal 5'-phosphate (PLP). Catalyzes the phosphorylation of pyridoxal to PLP.</text>
</comment>
<comment type="catalytic activity">
    <reaction evidence="1">
        <text>pyridoxal + ATP = pyridoxal 5'-phosphate + ADP + H(+)</text>
        <dbReference type="Rhea" id="RHEA:10224"/>
        <dbReference type="ChEBI" id="CHEBI:15378"/>
        <dbReference type="ChEBI" id="CHEBI:17310"/>
        <dbReference type="ChEBI" id="CHEBI:30616"/>
        <dbReference type="ChEBI" id="CHEBI:456216"/>
        <dbReference type="ChEBI" id="CHEBI:597326"/>
        <dbReference type="EC" id="2.7.1.35"/>
    </reaction>
</comment>
<comment type="cofactor">
    <cofactor evidence="1">
        <name>Mg(2+)</name>
        <dbReference type="ChEBI" id="CHEBI:18420"/>
    </cofactor>
</comment>
<comment type="pathway">
    <text evidence="1">Cofactor metabolism; pyridoxal 5'-phosphate salvage; pyridoxal 5'-phosphate from pyridoxal: step 1/1.</text>
</comment>
<comment type="subunit">
    <text evidence="1">Homodimer.</text>
</comment>
<comment type="similarity">
    <text evidence="1">Belongs to the pyridoxine kinase family. PdxY subfamily.</text>
</comment>
<protein>
    <recommendedName>
        <fullName evidence="1">Pyridoxal kinase PdxY</fullName>
        <shortName evidence="1">PL kinase</shortName>
        <ecNumber evidence="1">2.7.1.35</ecNumber>
    </recommendedName>
</protein>
<gene>
    <name evidence="1" type="primary">pdxY</name>
    <name type="ordered locus">Lxx10710</name>
</gene>
<proteinExistence type="inferred from homology"/>
<keyword id="KW-0067">ATP-binding</keyword>
<keyword id="KW-0418">Kinase</keyword>
<keyword id="KW-0460">Magnesium</keyword>
<keyword id="KW-0547">Nucleotide-binding</keyword>
<keyword id="KW-1185">Reference proteome</keyword>
<keyword id="KW-0808">Transferase</keyword>
<feature type="chain" id="PRO_0000269813" description="Pyridoxal kinase PdxY">
    <location>
        <begin position="1"/>
        <end position="283"/>
    </location>
</feature>
<feature type="binding site" evidence="1">
    <location>
        <position position="8"/>
    </location>
    <ligand>
        <name>substrate</name>
    </ligand>
</feature>
<feature type="binding site" evidence="1">
    <location>
        <position position="110"/>
    </location>
    <ligand>
        <name>ATP</name>
        <dbReference type="ChEBI" id="CHEBI:30616"/>
    </ligand>
</feature>
<feature type="binding site" evidence="1">
    <location>
        <position position="147"/>
    </location>
    <ligand>
        <name>ATP</name>
        <dbReference type="ChEBI" id="CHEBI:30616"/>
    </ligand>
</feature>
<feature type="binding site" evidence="1">
    <location>
        <position position="219"/>
    </location>
    <ligand>
        <name>substrate</name>
    </ligand>
</feature>
<dbReference type="EC" id="2.7.1.35" evidence="1"/>
<dbReference type="EMBL" id="AE016822">
    <property type="protein sequence ID" value="AAT88924.1"/>
    <property type="molecule type" value="Genomic_DNA"/>
</dbReference>
<dbReference type="RefSeq" id="WP_011185920.1">
    <property type="nucleotide sequence ID" value="NC_006087.1"/>
</dbReference>
<dbReference type="SMR" id="Q6AFC1"/>
<dbReference type="STRING" id="281090.Lxx10710"/>
<dbReference type="KEGG" id="lxx:Lxx10710"/>
<dbReference type="eggNOG" id="COG2240">
    <property type="taxonomic scope" value="Bacteria"/>
</dbReference>
<dbReference type="HOGENOM" id="CLU_046496_3_1_11"/>
<dbReference type="UniPathway" id="UPA01068">
    <property type="reaction ID" value="UER00298"/>
</dbReference>
<dbReference type="Proteomes" id="UP000001306">
    <property type="component" value="Chromosome"/>
</dbReference>
<dbReference type="GO" id="GO:0005829">
    <property type="term" value="C:cytosol"/>
    <property type="evidence" value="ECO:0007669"/>
    <property type="project" value="TreeGrafter"/>
</dbReference>
<dbReference type="GO" id="GO:0005524">
    <property type="term" value="F:ATP binding"/>
    <property type="evidence" value="ECO:0007669"/>
    <property type="project" value="UniProtKB-UniRule"/>
</dbReference>
<dbReference type="GO" id="GO:0000287">
    <property type="term" value="F:magnesium ion binding"/>
    <property type="evidence" value="ECO:0007669"/>
    <property type="project" value="UniProtKB-UniRule"/>
</dbReference>
<dbReference type="GO" id="GO:0008478">
    <property type="term" value="F:pyridoxal kinase activity"/>
    <property type="evidence" value="ECO:0007669"/>
    <property type="project" value="UniProtKB-UniRule"/>
</dbReference>
<dbReference type="GO" id="GO:0009443">
    <property type="term" value="P:pyridoxal 5'-phosphate salvage"/>
    <property type="evidence" value="ECO:0007669"/>
    <property type="project" value="UniProtKB-UniRule"/>
</dbReference>
<dbReference type="CDD" id="cd01173">
    <property type="entry name" value="pyridoxal_pyridoxamine_kinase"/>
    <property type="match status" value="1"/>
</dbReference>
<dbReference type="Gene3D" id="3.40.1190.20">
    <property type="match status" value="1"/>
</dbReference>
<dbReference type="HAMAP" id="MF_01639">
    <property type="entry name" value="PdxY"/>
    <property type="match status" value="1"/>
</dbReference>
<dbReference type="InterPro" id="IPR013749">
    <property type="entry name" value="PM/HMP-P_kinase-1"/>
</dbReference>
<dbReference type="InterPro" id="IPR004625">
    <property type="entry name" value="PyrdxlKinase"/>
</dbReference>
<dbReference type="InterPro" id="IPR023685">
    <property type="entry name" value="Pyridoxal_kinase_PdxY"/>
</dbReference>
<dbReference type="InterPro" id="IPR029056">
    <property type="entry name" value="Ribokinase-like"/>
</dbReference>
<dbReference type="NCBIfam" id="NF004398">
    <property type="entry name" value="PRK05756.1"/>
    <property type="match status" value="1"/>
</dbReference>
<dbReference type="NCBIfam" id="TIGR00687">
    <property type="entry name" value="pyridox_kin"/>
    <property type="match status" value="1"/>
</dbReference>
<dbReference type="PANTHER" id="PTHR10534">
    <property type="entry name" value="PYRIDOXAL KINASE"/>
    <property type="match status" value="1"/>
</dbReference>
<dbReference type="PANTHER" id="PTHR10534:SF2">
    <property type="entry name" value="PYRIDOXAL KINASE"/>
    <property type="match status" value="1"/>
</dbReference>
<dbReference type="Pfam" id="PF08543">
    <property type="entry name" value="Phos_pyr_kin"/>
    <property type="match status" value="1"/>
</dbReference>
<dbReference type="SUPFAM" id="SSF53613">
    <property type="entry name" value="Ribokinase-like"/>
    <property type="match status" value="1"/>
</dbReference>
<organism>
    <name type="scientific">Leifsonia xyli subsp. xyli (strain CTCB07)</name>
    <dbReference type="NCBI Taxonomy" id="281090"/>
    <lineage>
        <taxon>Bacteria</taxon>
        <taxon>Bacillati</taxon>
        <taxon>Actinomycetota</taxon>
        <taxon>Actinomycetes</taxon>
        <taxon>Micrococcales</taxon>
        <taxon>Microbacteriaceae</taxon>
        <taxon>Leifsonia</taxon>
    </lineage>
</organism>
<reference key="1">
    <citation type="journal article" date="2004" name="Mol. Plant Microbe Interact.">
        <title>The genome sequence of the Gram-positive sugarcane pathogen Leifsonia xyli subsp. xyli.</title>
        <authorList>
            <person name="Monteiro-Vitorello C.B."/>
            <person name="Camargo L.E.A."/>
            <person name="Van Sluys M.A."/>
            <person name="Kitajima J.P."/>
            <person name="Truffi D."/>
            <person name="do Amaral A.M."/>
            <person name="Harakava R."/>
            <person name="de Oliveira J.C.F."/>
            <person name="Wood D."/>
            <person name="de Oliveira M.C."/>
            <person name="Miyaki C.Y."/>
            <person name="Takita M.A."/>
            <person name="da Silva A.C.R."/>
            <person name="Furlan L.R."/>
            <person name="Carraro D.M."/>
            <person name="Camarotte G."/>
            <person name="Almeida N.F. Jr."/>
            <person name="Carrer H."/>
            <person name="Coutinho L.L."/>
            <person name="El-Dorry H.A."/>
            <person name="Ferro M.I.T."/>
            <person name="Gagliardi P.R."/>
            <person name="Giglioti E."/>
            <person name="Goldman M.H.S."/>
            <person name="Goldman G.H."/>
            <person name="Kimura E.T."/>
            <person name="Ferro E.S."/>
            <person name="Kuramae E.E."/>
            <person name="Lemos E.G.M."/>
            <person name="Lemos M.V.F."/>
            <person name="Mauro S.M.Z."/>
            <person name="Machado M.A."/>
            <person name="Marino C.L."/>
            <person name="Menck C.F."/>
            <person name="Nunes L.R."/>
            <person name="Oliveira R.C."/>
            <person name="Pereira G.G."/>
            <person name="Siqueira W."/>
            <person name="de Souza A.A."/>
            <person name="Tsai S.M."/>
            <person name="Zanca A.S."/>
            <person name="Simpson A.J.G."/>
            <person name="Brumbley S.M."/>
            <person name="Setubal J.C."/>
        </authorList>
    </citation>
    <scope>NUCLEOTIDE SEQUENCE [LARGE SCALE GENOMIC DNA]</scope>
    <source>
        <strain>CTCB07</strain>
    </source>
</reference>
<evidence type="ECO:0000255" key="1">
    <source>
        <dbReference type="HAMAP-Rule" id="MF_01639"/>
    </source>
</evidence>
<accession>Q6AFC1</accession>